<sequence>MSNLENLTSKIIEDANKEAEKLLSEAKKEENKIVDEKIKKANKAKEQIIERAKRESRTKAERVISNAHLKVRNNKLEAKQEMINKVFDKAVIKLQNLSKDEYLNFVKSSILSLDIEGDEEIIVSPNDKDKIDISLMLTLNNQLKAKGKKALLKISNENRNIKGGFILYKNGIEINNSFEALVDSLRDELEQEIIEALFS</sequence>
<proteinExistence type="inferred from homology"/>
<feature type="chain" id="PRO_1000205049" description="V-type proton ATPase subunit E">
    <location>
        <begin position="1"/>
        <end position="199"/>
    </location>
</feature>
<comment type="function">
    <text evidence="1">Produces ATP from ADP in the presence of a proton gradient across the membrane.</text>
</comment>
<comment type="similarity">
    <text evidence="1">Belongs to the V-ATPase E subunit family.</text>
</comment>
<name>VATE_CLOB6</name>
<keyword id="KW-0066">ATP synthesis</keyword>
<keyword id="KW-0375">Hydrogen ion transport</keyword>
<keyword id="KW-0406">Ion transport</keyword>
<keyword id="KW-0813">Transport</keyword>
<protein>
    <recommendedName>
        <fullName evidence="1">V-type proton ATPase subunit E</fullName>
    </recommendedName>
    <alternativeName>
        <fullName evidence="1">V-ATPase subunit E</fullName>
    </alternativeName>
</protein>
<gene>
    <name evidence="1" type="primary">atpE</name>
    <name type="ordered locus">CLJ_B2858</name>
</gene>
<dbReference type="EMBL" id="CP001083">
    <property type="protein sequence ID" value="ACQ52891.1"/>
    <property type="molecule type" value="Genomic_DNA"/>
</dbReference>
<dbReference type="RefSeq" id="WP_012720788.1">
    <property type="nucleotide sequence ID" value="NC_012658.1"/>
</dbReference>
<dbReference type="SMR" id="C3L1B4"/>
<dbReference type="KEGG" id="cbi:CLJ_B2858"/>
<dbReference type="HOGENOM" id="CLU_105846_0_0_9"/>
<dbReference type="Proteomes" id="UP000002333">
    <property type="component" value="Chromosome"/>
</dbReference>
<dbReference type="GO" id="GO:0033178">
    <property type="term" value="C:proton-transporting two-sector ATPase complex, catalytic domain"/>
    <property type="evidence" value="ECO:0007669"/>
    <property type="project" value="InterPro"/>
</dbReference>
<dbReference type="GO" id="GO:0005524">
    <property type="term" value="F:ATP binding"/>
    <property type="evidence" value="ECO:0007669"/>
    <property type="project" value="UniProtKB-UniRule"/>
</dbReference>
<dbReference type="GO" id="GO:0046933">
    <property type="term" value="F:proton-transporting ATP synthase activity, rotational mechanism"/>
    <property type="evidence" value="ECO:0007669"/>
    <property type="project" value="UniProtKB-UniRule"/>
</dbReference>
<dbReference type="GO" id="GO:0046961">
    <property type="term" value="F:proton-transporting ATPase activity, rotational mechanism"/>
    <property type="evidence" value="ECO:0007669"/>
    <property type="project" value="InterPro"/>
</dbReference>
<dbReference type="GO" id="GO:0042777">
    <property type="term" value="P:proton motive force-driven plasma membrane ATP synthesis"/>
    <property type="evidence" value="ECO:0007669"/>
    <property type="project" value="UniProtKB-UniRule"/>
</dbReference>
<dbReference type="CDD" id="cd06503">
    <property type="entry name" value="ATP-synt_Fo_b"/>
    <property type="match status" value="1"/>
</dbReference>
<dbReference type="Gene3D" id="3.30.2320.30">
    <property type="entry name" value="ATP synthase, E subunit, C-terminal"/>
    <property type="match status" value="1"/>
</dbReference>
<dbReference type="Gene3D" id="1.20.5.620">
    <property type="entry name" value="F1F0 ATP synthase subunit B, membrane domain"/>
    <property type="match status" value="1"/>
</dbReference>
<dbReference type="HAMAP" id="MF_00311">
    <property type="entry name" value="ATP_synth_E_arch"/>
    <property type="match status" value="1"/>
</dbReference>
<dbReference type="InterPro" id="IPR038495">
    <property type="entry name" value="ATPase_E_C"/>
</dbReference>
<dbReference type="InterPro" id="IPR002842">
    <property type="entry name" value="ATPase_V1_Esu"/>
</dbReference>
<dbReference type="Pfam" id="PF01991">
    <property type="entry name" value="vATP-synt_E"/>
    <property type="match status" value="1"/>
</dbReference>
<dbReference type="SUPFAM" id="SSF160527">
    <property type="entry name" value="V-type ATPase subunit E-like"/>
    <property type="match status" value="1"/>
</dbReference>
<reference key="1">
    <citation type="submission" date="2008-05" db="EMBL/GenBank/DDBJ databases">
        <title>Genome sequence of Clostridium botulinum Ba4 strain 657.</title>
        <authorList>
            <person name="Shrivastava S."/>
            <person name="Brown J.L."/>
            <person name="Bruce D."/>
            <person name="Detter C."/>
            <person name="Munk C."/>
            <person name="Smith L.A."/>
            <person name="Smith T.J."/>
            <person name="Sutton G."/>
            <person name="Brettin T.S."/>
        </authorList>
    </citation>
    <scope>NUCLEOTIDE SEQUENCE [LARGE SCALE GENOMIC DNA]</scope>
    <source>
        <strain>657 / Type Ba4</strain>
    </source>
</reference>
<evidence type="ECO:0000255" key="1">
    <source>
        <dbReference type="HAMAP-Rule" id="MF_00311"/>
    </source>
</evidence>
<accession>C3L1B4</accession>
<organism>
    <name type="scientific">Clostridium botulinum (strain 657 / Type Ba4)</name>
    <dbReference type="NCBI Taxonomy" id="515621"/>
    <lineage>
        <taxon>Bacteria</taxon>
        <taxon>Bacillati</taxon>
        <taxon>Bacillota</taxon>
        <taxon>Clostridia</taxon>
        <taxon>Eubacteriales</taxon>
        <taxon>Clostridiaceae</taxon>
        <taxon>Clostridium</taxon>
    </lineage>
</organism>